<organism>
    <name type="scientific">Chlorobium luteolum (strain DSM 273 / BCRC 81028 / 2530)</name>
    <name type="common">Pelodictyon luteolum</name>
    <dbReference type="NCBI Taxonomy" id="319225"/>
    <lineage>
        <taxon>Bacteria</taxon>
        <taxon>Pseudomonadati</taxon>
        <taxon>Chlorobiota</taxon>
        <taxon>Chlorobiia</taxon>
        <taxon>Chlorobiales</taxon>
        <taxon>Chlorobiaceae</taxon>
        <taxon>Chlorobium/Pelodictyon group</taxon>
        <taxon>Pelodictyon</taxon>
    </lineage>
</organism>
<comment type="function">
    <text evidence="1">Part of the Sec protein translocase complex. Interacts with the SecYEG preprotein conducting channel. Has a central role in coupling the hydrolysis of ATP to the transfer of proteins into and across the cell membrane, serving as an ATP-driven molecular motor driving the stepwise translocation of polypeptide chains across the membrane.</text>
</comment>
<comment type="catalytic activity">
    <reaction evidence="1">
        <text>ATP + H2O + cellular proteinSide 1 = ADP + phosphate + cellular proteinSide 2.</text>
        <dbReference type="EC" id="7.4.2.8"/>
    </reaction>
</comment>
<comment type="cofactor">
    <cofactor evidence="1">
        <name>Zn(2+)</name>
        <dbReference type="ChEBI" id="CHEBI:29105"/>
    </cofactor>
    <text evidence="1">May bind 1 zinc ion per subunit.</text>
</comment>
<comment type="subunit">
    <text evidence="1">Monomer and homodimer. Part of the essential Sec protein translocation apparatus which comprises SecA, SecYEG and auxiliary proteins SecDF. Other proteins may also be involved.</text>
</comment>
<comment type="subcellular location">
    <subcellularLocation>
        <location evidence="1">Cell inner membrane</location>
        <topology evidence="1">Peripheral membrane protein</topology>
        <orientation evidence="1">Cytoplasmic side</orientation>
    </subcellularLocation>
    <subcellularLocation>
        <location evidence="1">Cytoplasm</location>
    </subcellularLocation>
    <text evidence="1">Distribution is 50-50.</text>
</comment>
<comment type="similarity">
    <text evidence="1">Belongs to the SecA family.</text>
</comment>
<name>SECA_CHLL3</name>
<evidence type="ECO:0000255" key="1">
    <source>
        <dbReference type="HAMAP-Rule" id="MF_01382"/>
    </source>
</evidence>
<evidence type="ECO:0000256" key="2">
    <source>
        <dbReference type="SAM" id="MobiDB-lite"/>
    </source>
</evidence>
<sequence>MLKFFEKIFGSKHEKDVKKIQPVIDRINELHAALVPLSDDELRARCMELKARVRKTLEPIESKRSDLYLKLDDAAISLEDADRINEEIDELAKEYETATAAVLEEILPDTYAVVKDTCRRLKGHVYTVMGREATWDMVPYDVQLIGGIVLHSGKISEMATGEGKTLVSTLPTFLNALTGRGVHLVTVNDYLAQRDKEWMNPVFEFHGISVGVILNTMRPEERRRQYQCDVTYGTNNEFGFDYLRDNMAGTEDEMVQRDFYFAIVDEVDSVLIDEARTPLIISGPVPNADNSKFEEIRPWIEQLVRAQQHLTASFLSEAEKGLKNEKPDPEAGLALLRVKRGQPKNSRYTKLLAQQGVAKLIQTTENEYLRDKSSRMHEVDDELYFAVDEKASTIDLTDKGREFLSKLSHQDRDLFLLPDVGTEIAAIDADSSIAAPDKIMRKDEVYRLFAERSERLHNIAQLLKAYSLFTKDDEYVVQNGQVMIVDEFTGRILPGRRYSDGLHQAIEAKENVKIEGETQTMATVTIQNFFRLYKKLAGMTGTAETEASEFYEIYKLDVVAIPTNRPIVRRDMDDLVYKTRREKYNAIAAKVEELQKKGQPVLVGTTSVEVSETLSRMLRAKRITHNVLNAKQNEREAEIVAEAGRQGAVTIATNMAGRGTDIKLGEGVRDLGGLFILGSERHESRRIDRQLRGRAGRQGDPGESVFFVSLEDELMRLFGSDRVISVMDRLGHEEGDVIEHSMITKSIERAQKKVEEQNFAIRKRLLEYDDVLNQQREVIYTRRRDGLKKERLTSDILDLLRDYCDTTVEKHHKTHDVDALEEQVLRELSIEFKPDRETFEREGIAPMADSLYDLALAFYRRKEEAVPEEIMRQIEKYAVLSVIDKHWREHLREIDTLREGINLRAYGQKDPLLEYKQEAYNLFILLLHEIELETLSLAFKLFPVHPDEAGEIEERRRRAAIQQEKLMAQHEEAGSVYNAQPDGEPESQASKQQPVVADHSKPGRNDLCPCGSGKKYKNCHGREA</sequence>
<accession>Q3B3Y1</accession>
<dbReference type="EC" id="7.4.2.8" evidence="1"/>
<dbReference type="EMBL" id="CP000096">
    <property type="protein sequence ID" value="ABB23950.1"/>
    <property type="molecule type" value="Genomic_DNA"/>
</dbReference>
<dbReference type="RefSeq" id="WP_011357822.1">
    <property type="nucleotide sequence ID" value="NC_007512.1"/>
</dbReference>
<dbReference type="SMR" id="Q3B3Y1"/>
<dbReference type="STRING" id="319225.Plut_1088"/>
<dbReference type="KEGG" id="plt:Plut_1088"/>
<dbReference type="eggNOG" id="COG0653">
    <property type="taxonomic scope" value="Bacteria"/>
</dbReference>
<dbReference type="HOGENOM" id="CLU_005314_3_0_10"/>
<dbReference type="OrthoDB" id="9805579at2"/>
<dbReference type="Proteomes" id="UP000002709">
    <property type="component" value="Chromosome"/>
</dbReference>
<dbReference type="GO" id="GO:0031522">
    <property type="term" value="C:cell envelope Sec protein transport complex"/>
    <property type="evidence" value="ECO:0007669"/>
    <property type="project" value="TreeGrafter"/>
</dbReference>
<dbReference type="GO" id="GO:0005829">
    <property type="term" value="C:cytosol"/>
    <property type="evidence" value="ECO:0007669"/>
    <property type="project" value="TreeGrafter"/>
</dbReference>
<dbReference type="GO" id="GO:0005886">
    <property type="term" value="C:plasma membrane"/>
    <property type="evidence" value="ECO:0007669"/>
    <property type="project" value="UniProtKB-SubCell"/>
</dbReference>
<dbReference type="GO" id="GO:0005524">
    <property type="term" value="F:ATP binding"/>
    <property type="evidence" value="ECO:0007669"/>
    <property type="project" value="UniProtKB-UniRule"/>
</dbReference>
<dbReference type="GO" id="GO:0046872">
    <property type="term" value="F:metal ion binding"/>
    <property type="evidence" value="ECO:0007669"/>
    <property type="project" value="UniProtKB-KW"/>
</dbReference>
<dbReference type="GO" id="GO:0008564">
    <property type="term" value="F:protein-exporting ATPase activity"/>
    <property type="evidence" value="ECO:0007669"/>
    <property type="project" value="UniProtKB-EC"/>
</dbReference>
<dbReference type="GO" id="GO:0065002">
    <property type="term" value="P:intracellular protein transmembrane transport"/>
    <property type="evidence" value="ECO:0007669"/>
    <property type="project" value="UniProtKB-UniRule"/>
</dbReference>
<dbReference type="GO" id="GO:0017038">
    <property type="term" value="P:protein import"/>
    <property type="evidence" value="ECO:0007669"/>
    <property type="project" value="InterPro"/>
</dbReference>
<dbReference type="GO" id="GO:0006605">
    <property type="term" value="P:protein targeting"/>
    <property type="evidence" value="ECO:0007669"/>
    <property type="project" value="UniProtKB-UniRule"/>
</dbReference>
<dbReference type="GO" id="GO:0043952">
    <property type="term" value="P:protein transport by the Sec complex"/>
    <property type="evidence" value="ECO:0007669"/>
    <property type="project" value="TreeGrafter"/>
</dbReference>
<dbReference type="CDD" id="cd17928">
    <property type="entry name" value="DEXDc_SecA"/>
    <property type="match status" value="1"/>
</dbReference>
<dbReference type="CDD" id="cd18803">
    <property type="entry name" value="SF2_C_secA"/>
    <property type="match status" value="1"/>
</dbReference>
<dbReference type="FunFam" id="3.40.50.300:FF:000246">
    <property type="entry name" value="Preprotein translocase subunit SecA"/>
    <property type="match status" value="1"/>
</dbReference>
<dbReference type="FunFam" id="3.40.50.300:FF:000694">
    <property type="entry name" value="Preprotein translocase subunit SecA"/>
    <property type="match status" value="1"/>
</dbReference>
<dbReference type="Gene3D" id="1.10.3060.10">
    <property type="entry name" value="Helical scaffold and wing domains of SecA"/>
    <property type="match status" value="1"/>
</dbReference>
<dbReference type="Gene3D" id="3.40.50.300">
    <property type="entry name" value="P-loop containing nucleotide triphosphate hydrolases"/>
    <property type="match status" value="2"/>
</dbReference>
<dbReference type="Gene3D" id="3.90.1440.10">
    <property type="entry name" value="SecA, preprotein cross-linking domain"/>
    <property type="match status" value="1"/>
</dbReference>
<dbReference type="HAMAP" id="MF_01382">
    <property type="entry name" value="SecA"/>
    <property type="match status" value="1"/>
</dbReference>
<dbReference type="InterPro" id="IPR014001">
    <property type="entry name" value="Helicase_ATP-bd"/>
</dbReference>
<dbReference type="InterPro" id="IPR001650">
    <property type="entry name" value="Helicase_C-like"/>
</dbReference>
<dbReference type="InterPro" id="IPR027417">
    <property type="entry name" value="P-loop_NTPase"/>
</dbReference>
<dbReference type="InterPro" id="IPR004027">
    <property type="entry name" value="SEC_C_motif"/>
</dbReference>
<dbReference type="InterPro" id="IPR000185">
    <property type="entry name" value="SecA"/>
</dbReference>
<dbReference type="InterPro" id="IPR020937">
    <property type="entry name" value="SecA_CS"/>
</dbReference>
<dbReference type="InterPro" id="IPR011115">
    <property type="entry name" value="SecA_DEAD"/>
</dbReference>
<dbReference type="InterPro" id="IPR014018">
    <property type="entry name" value="SecA_motor_DEAD"/>
</dbReference>
<dbReference type="InterPro" id="IPR011130">
    <property type="entry name" value="SecA_preprotein_X-link_dom"/>
</dbReference>
<dbReference type="InterPro" id="IPR044722">
    <property type="entry name" value="SecA_SF2_C"/>
</dbReference>
<dbReference type="InterPro" id="IPR011116">
    <property type="entry name" value="SecA_Wing/Scaffold"/>
</dbReference>
<dbReference type="InterPro" id="IPR036266">
    <property type="entry name" value="SecA_Wing/Scaffold_sf"/>
</dbReference>
<dbReference type="InterPro" id="IPR036670">
    <property type="entry name" value="SecA_X-link_sf"/>
</dbReference>
<dbReference type="NCBIfam" id="TIGR00963">
    <property type="entry name" value="secA"/>
    <property type="match status" value="1"/>
</dbReference>
<dbReference type="PANTHER" id="PTHR30612:SF0">
    <property type="entry name" value="CHLOROPLAST PROTEIN-TRANSPORTING ATPASE"/>
    <property type="match status" value="1"/>
</dbReference>
<dbReference type="PANTHER" id="PTHR30612">
    <property type="entry name" value="SECA INNER MEMBRANE COMPONENT OF SEC PROTEIN SECRETION SYSTEM"/>
    <property type="match status" value="1"/>
</dbReference>
<dbReference type="Pfam" id="PF21090">
    <property type="entry name" value="P-loop_SecA"/>
    <property type="match status" value="2"/>
</dbReference>
<dbReference type="Pfam" id="PF02810">
    <property type="entry name" value="SEC-C"/>
    <property type="match status" value="1"/>
</dbReference>
<dbReference type="Pfam" id="PF07517">
    <property type="entry name" value="SecA_DEAD"/>
    <property type="match status" value="1"/>
</dbReference>
<dbReference type="Pfam" id="PF01043">
    <property type="entry name" value="SecA_PP_bind"/>
    <property type="match status" value="1"/>
</dbReference>
<dbReference type="Pfam" id="PF07516">
    <property type="entry name" value="SecA_SW"/>
    <property type="match status" value="1"/>
</dbReference>
<dbReference type="PRINTS" id="PR00906">
    <property type="entry name" value="SECA"/>
</dbReference>
<dbReference type="SMART" id="SM00957">
    <property type="entry name" value="SecA_DEAD"/>
    <property type="match status" value="1"/>
</dbReference>
<dbReference type="SMART" id="SM00958">
    <property type="entry name" value="SecA_PP_bind"/>
    <property type="match status" value="1"/>
</dbReference>
<dbReference type="SUPFAM" id="SSF81886">
    <property type="entry name" value="Helical scaffold and wing domains of SecA"/>
    <property type="match status" value="1"/>
</dbReference>
<dbReference type="SUPFAM" id="SSF52540">
    <property type="entry name" value="P-loop containing nucleoside triphosphate hydrolases"/>
    <property type="match status" value="2"/>
</dbReference>
<dbReference type="SUPFAM" id="SSF81767">
    <property type="entry name" value="Pre-protein crosslinking domain of SecA"/>
    <property type="match status" value="1"/>
</dbReference>
<dbReference type="PROSITE" id="PS01312">
    <property type="entry name" value="SECA"/>
    <property type="match status" value="1"/>
</dbReference>
<dbReference type="PROSITE" id="PS51196">
    <property type="entry name" value="SECA_MOTOR_DEAD"/>
    <property type="match status" value="1"/>
</dbReference>
<gene>
    <name evidence="1" type="primary">secA</name>
    <name type="ordered locus">Plut_1088</name>
</gene>
<feature type="chain" id="PRO_0000320885" description="Protein translocase subunit SecA">
    <location>
        <begin position="1"/>
        <end position="1024"/>
    </location>
</feature>
<feature type="region of interest" description="Disordered" evidence="2">
    <location>
        <begin position="970"/>
        <end position="1024"/>
    </location>
</feature>
<feature type="compositionally biased region" description="Basic residues" evidence="2">
    <location>
        <begin position="1014"/>
        <end position="1024"/>
    </location>
</feature>
<feature type="binding site" evidence="1">
    <location>
        <position position="143"/>
    </location>
    <ligand>
        <name>ATP</name>
        <dbReference type="ChEBI" id="CHEBI:30616"/>
    </ligand>
</feature>
<feature type="binding site" evidence="1">
    <location>
        <begin position="161"/>
        <end position="165"/>
    </location>
    <ligand>
        <name>ATP</name>
        <dbReference type="ChEBI" id="CHEBI:30616"/>
    </ligand>
</feature>
<feature type="binding site" evidence="1">
    <location>
        <position position="661"/>
    </location>
    <ligand>
        <name>ATP</name>
        <dbReference type="ChEBI" id="CHEBI:30616"/>
    </ligand>
</feature>
<feature type="binding site" evidence="1">
    <location>
        <position position="1008"/>
    </location>
    <ligand>
        <name>Zn(2+)</name>
        <dbReference type="ChEBI" id="CHEBI:29105"/>
    </ligand>
</feature>
<feature type="binding site" evidence="1">
    <location>
        <position position="1010"/>
    </location>
    <ligand>
        <name>Zn(2+)</name>
        <dbReference type="ChEBI" id="CHEBI:29105"/>
    </ligand>
</feature>
<feature type="binding site" evidence="1">
    <location>
        <position position="1019"/>
    </location>
    <ligand>
        <name>Zn(2+)</name>
        <dbReference type="ChEBI" id="CHEBI:29105"/>
    </ligand>
</feature>
<feature type="binding site" evidence="1">
    <location>
        <position position="1020"/>
    </location>
    <ligand>
        <name>Zn(2+)</name>
        <dbReference type="ChEBI" id="CHEBI:29105"/>
    </ligand>
</feature>
<protein>
    <recommendedName>
        <fullName evidence="1">Protein translocase subunit SecA</fullName>
        <ecNumber evidence="1">7.4.2.8</ecNumber>
    </recommendedName>
</protein>
<reference key="1">
    <citation type="submission" date="2005-08" db="EMBL/GenBank/DDBJ databases">
        <title>Complete sequence of Pelodictyon luteolum DSM 273.</title>
        <authorList>
            <consortium name="US DOE Joint Genome Institute"/>
            <person name="Copeland A."/>
            <person name="Lucas S."/>
            <person name="Lapidus A."/>
            <person name="Barry K."/>
            <person name="Detter J.C."/>
            <person name="Glavina T."/>
            <person name="Hammon N."/>
            <person name="Israni S."/>
            <person name="Pitluck S."/>
            <person name="Bryant D."/>
            <person name="Schmutz J."/>
            <person name="Larimer F."/>
            <person name="Land M."/>
            <person name="Kyrpides N."/>
            <person name="Ivanova N."/>
            <person name="Richardson P."/>
        </authorList>
    </citation>
    <scope>NUCLEOTIDE SEQUENCE [LARGE SCALE GENOMIC DNA]</scope>
    <source>
        <strain>DSM 273 / BCRC 81028 / 2530</strain>
    </source>
</reference>
<proteinExistence type="inferred from homology"/>
<keyword id="KW-0067">ATP-binding</keyword>
<keyword id="KW-0997">Cell inner membrane</keyword>
<keyword id="KW-1003">Cell membrane</keyword>
<keyword id="KW-0963">Cytoplasm</keyword>
<keyword id="KW-0472">Membrane</keyword>
<keyword id="KW-0479">Metal-binding</keyword>
<keyword id="KW-0547">Nucleotide-binding</keyword>
<keyword id="KW-0653">Protein transport</keyword>
<keyword id="KW-1185">Reference proteome</keyword>
<keyword id="KW-1278">Translocase</keyword>
<keyword id="KW-0811">Translocation</keyword>
<keyword id="KW-0813">Transport</keyword>
<keyword id="KW-0862">Zinc</keyword>